<organism>
    <name type="scientific">Nitrosomonas europaea (strain ATCC 19718 / CIP 103999 / KCTC 2705 / NBRC 14298)</name>
    <dbReference type="NCBI Taxonomy" id="228410"/>
    <lineage>
        <taxon>Bacteria</taxon>
        <taxon>Pseudomonadati</taxon>
        <taxon>Pseudomonadota</taxon>
        <taxon>Betaproteobacteria</taxon>
        <taxon>Nitrosomonadales</taxon>
        <taxon>Nitrosomonadaceae</taxon>
        <taxon>Nitrosomonas</taxon>
    </lineage>
</organism>
<evidence type="ECO:0000255" key="1">
    <source>
        <dbReference type="HAMAP-Rule" id="MF_00233"/>
    </source>
</evidence>
<feature type="signal peptide" evidence="1">
    <location>
        <begin position="1"/>
        <end position="16"/>
    </location>
</feature>
<feature type="chain" id="PRO_0000018303" description="Outer-membrane lipoprotein LolB">
    <location>
        <begin position="17"/>
        <end position="212"/>
    </location>
</feature>
<feature type="lipid moiety-binding region" description="N-palmitoyl cysteine" evidence="1">
    <location>
        <position position="17"/>
    </location>
</feature>
<feature type="lipid moiety-binding region" description="S-diacylglycerol cysteine" evidence="1">
    <location>
        <position position="17"/>
    </location>
</feature>
<protein>
    <recommendedName>
        <fullName evidence="1">Outer-membrane lipoprotein LolB</fullName>
    </recommendedName>
</protein>
<accession>Q82TQ2</accession>
<name>LOLB_NITEU</name>
<gene>
    <name evidence="1" type="primary">lolB</name>
    <name type="ordered locus">NE1828</name>
</gene>
<comment type="function">
    <text evidence="1">Plays a critical role in the incorporation of lipoproteins in the outer membrane after they are released by the LolA protein.</text>
</comment>
<comment type="subunit">
    <text evidence="1">Monomer.</text>
</comment>
<comment type="subcellular location">
    <subcellularLocation>
        <location evidence="1">Cell outer membrane</location>
        <topology evidence="1">Lipid-anchor</topology>
    </subcellularLocation>
</comment>
<comment type="similarity">
    <text evidence="1">Belongs to the LolB family.</text>
</comment>
<dbReference type="EMBL" id="AL954747">
    <property type="protein sequence ID" value="CAD85739.1"/>
    <property type="molecule type" value="Genomic_DNA"/>
</dbReference>
<dbReference type="SMR" id="Q82TQ2"/>
<dbReference type="STRING" id="228410.NE1828"/>
<dbReference type="KEGG" id="neu:NE1828"/>
<dbReference type="eggNOG" id="COG3017">
    <property type="taxonomic scope" value="Bacteria"/>
</dbReference>
<dbReference type="HOGENOM" id="CLU_092816_2_1_4"/>
<dbReference type="OrthoDB" id="9797618at2"/>
<dbReference type="PhylomeDB" id="Q82TQ2"/>
<dbReference type="Proteomes" id="UP000001416">
    <property type="component" value="Chromosome"/>
</dbReference>
<dbReference type="GO" id="GO:0009279">
    <property type="term" value="C:cell outer membrane"/>
    <property type="evidence" value="ECO:0007669"/>
    <property type="project" value="UniProtKB-SubCell"/>
</dbReference>
<dbReference type="GO" id="GO:0044874">
    <property type="term" value="P:lipoprotein localization to outer membrane"/>
    <property type="evidence" value="ECO:0007669"/>
    <property type="project" value="UniProtKB-UniRule"/>
</dbReference>
<dbReference type="GO" id="GO:0015031">
    <property type="term" value="P:protein transport"/>
    <property type="evidence" value="ECO:0007669"/>
    <property type="project" value="UniProtKB-KW"/>
</dbReference>
<dbReference type="CDD" id="cd16326">
    <property type="entry name" value="LolB"/>
    <property type="match status" value="1"/>
</dbReference>
<dbReference type="Gene3D" id="2.50.20.10">
    <property type="entry name" value="Lipoprotein localisation LolA/LolB/LppX"/>
    <property type="match status" value="1"/>
</dbReference>
<dbReference type="HAMAP" id="MF_00233">
    <property type="entry name" value="LolB"/>
    <property type="match status" value="1"/>
</dbReference>
<dbReference type="InterPro" id="IPR029046">
    <property type="entry name" value="LolA/LolB/LppX"/>
</dbReference>
<dbReference type="InterPro" id="IPR004565">
    <property type="entry name" value="OM_lipoprot_LolB"/>
</dbReference>
<dbReference type="NCBIfam" id="TIGR00548">
    <property type="entry name" value="lolB"/>
    <property type="match status" value="1"/>
</dbReference>
<dbReference type="Pfam" id="PF03550">
    <property type="entry name" value="LolB"/>
    <property type="match status" value="1"/>
</dbReference>
<dbReference type="SUPFAM" id="SSF89392">
    <property type="entry name" value="Prokaryotic lipoproteins and lipoprotein localization factors"/>
    <property type="match status" value="1"/>
</dbReference>
<dbReference type="PROSITE" id="PS51257">
    <property type="entry name" value="PROKAR_LIPOPROTEIN"/>
    <property type="match status" value="1"/>
</dbReference>
<reference key="1">
    <citation type="journal article" date="2003" name="J. Bacteriol.">
        <title>Complete genome sequence of the ammonia-oxidizing bacterium and obligate chemolithoautotroph Nitrosomonas europaea.</title>
        <authorList>
            <person name="Chain P."/>
            <person name="Lamerdin J.E."/>
            <person name="Larimer F.W."/>
            <person name="Regala W."/>
            <person name="Lao V."/>
            <person name="Land M.L."/>
            <person name="Hauser L."/>
            <person name="Hooper A.B."/>
            <person name="Klotz M.G."/>
            <person name="Norton J."/>
            <person name="Sayavedra-Soto L.A."/>
            <person name="Arciero D.M."/>
            <person name="Hommes N.G."/>
            <person name="Whittaker M.M."/>
            <person name="Arp D.J."/>
        </authorList>
    </citation>
    <scope>NUCLEOTIDE SEQUENCE [LARGE SCALE GENOMIC DNA]</scope>
    <source>
        <strain>ATCC 19718 / CIP 103999 / KCTC 2705 / NBRC 14298</strain>
    </source>
</reference>
<keyword id="KW-0998">Cell outer membrane</keyword>
<keyword id="KW-0143">Chaperone</keyword>
<keyword id="KW-0449">Lipoprotein</keyword>
<keyword id="KW-0472">Membrane</keyword>
<keyword id="KW-0564">Palmitate</keyword>
<keyword id="KW-0653">Protein transport</keyword>
<keyword id="KW-1185">Reference proteome</keyword>
<keyword id="KW-0732">Signal</keyword>
<keyword id="KW-0813">Transport</keyword>
<proteinExistence type="inferred from homology"/>
<sequence>MACRSWVLGILLVLVGCAGPEVHQGEVTTVVIQPVQEQADIANEPFVLTGRLAVNARQHRFSGGIRWQHTGQSDEIYLFSPLGQIVAEIFRDQTGVRLVTSEPAIYRAQNAEYLTSQVLGWELPLAGMRFWVRGTHFPDTVAEKDLDKNRRTVAIRQDGWQVVYQNYYPAQEGMSVLPRLLEFSRPDVKMRLLVDQWQGETKSGDATGRKLP</sequence>